<gene>
    <name type="primary">recO</name>
    <name type="ordered locus">CT_470</name>
</gene>
<feature type="chain" id="PRO_0000204944" description="DNA repair protein RecO">
    <location>
        <begin position="1"/>
        <end position="243"/>
    </location>
</feature>
<keyword id="KW-0227">DNA damage</keyword>
<keyword id="KW-0233">DNA recombination</keyword>
<keyword id="KW-0234">DNA repair</keyword>
<keyword id="KW-1185">Reference proteome</keyword>
<organism>
    <name type="scientific">Chlamydia trachomatis serovar D (strain ATCC VR-885 / DSM 19411 / UW-3/Cx)</name>
    <dbReference type="NCBI Taxonomy" id="272561"/>
    <lineage>
        <taxon>Bacteria</taxon>
        <taxon>Pseudomonadati</taxon>
        <taxon>Chlamydiota</taxon>
        <taxon>Chlamydiia</taxon>
        <taxon>Chlamydiales</taxon>
        <taxon>Chlamydiaceae</taxon>
        <taxon>Chlamydia/Chlamydophila group</taxon>
        <taxon>Chlamydia</taxon>
    </lineage>
</organism>
<evidence type="ECO:0000250" key="1"/>
<evidence type="ECO:0000305" key="2"/>
<name>RECO_CHLTR</name>
<proteinExistence type="inferred from homology"/>
<reference key="1">
    <citation type="journal article" date="1998" name="Science">
        <title>Genome sequence of an obligate intracellular pathogen of humans: Chlamydia trachomatis.</title>
        <authorList>
            <person name="Stephens R.S."/>
            <person name="Kalman S."/>
            <person name="Lammel C.J."/>
            <person name="Fan J."/>
            <person name="Marathe R."/>
            <person name="Aravind L."/>
            <person name="Mitchell W.P."/>
            <person name="Olinger L."/>
            <person name="Tatusov R.L."/>
            <person name="Zhao Q."/>
            <person name="Koonin E.V."/>
            <person name="Davis R.W."/>
        </authorList>
    </citation>
    <scope>NUCLEOTIDE SEQUENCE [LARGE SCALE GENOMIC DNA]</scope>
    <source>
        <strain>ATCC VR-885 / DSM 19411 / UW-3/Cx</strain>
    </source>
</reference>
<sequence>MQITLPGVVLTNSPAEKQYVIVKIFSPAGLLSAFAKNGASLSCDFRESLFPISFSLFTIQQSPPKMRKVIQGELQNPFTTIKSSYPLLQSAGKMIQAILKTQWHEKPSPHLFSLFLNFLQRIPETQYPNFFSSMFLLKLLQHEGSLDLSRSCTLCKTPLESSTIYRYEGALFCEKHAHEETISFSQEEDHILRVIVQAKKFQELVCLAEFPIDIDTKIDALFSSFLSETSEPSSLYYKGKTLL</sequence>
<accession>O84476</accession>
<comment type="function">
    <text evidence="1">Involved in DNA repair and RecF pathway recombination.</text>
</comment>
<comment type="similarity">
    <text evidence="2">Belongs to the RecO family.</text>
</comment>
<dbReference type="EMBL" id="AE001273">
    <property type="protein sequence ID" value="AAC68070.1"/>
    <property type="molecule type" value="Genomic_DNA"/>
</dbReference>
<dbReference type="PIR" id="B71512">
    <property type="entry name" value="B71512"/>
</dbReference>
<dbReference type="RefSeq" id="NP_219983.1">
    <property type="nucleotide sequence ID" value="NC_000117.1"/>
</dbReference>
<dbReference type="RefSeq" id="WP_009871828.1">
    <property type="nucleotide sequence ID" value="NC_000117.1"/>
</dbReference>
<dbReference type="SMR" id="O84476"/>
<dbReference type="STRING" id="272561.CT_470"/>
<dbReference type="EnsemblBacteria" id="AAC68070">
    <property type="protein sequence ID" value="AAC68070"/>
    <property type="gene ID" value="CT_470"/>
</dbReference>
<dbReference type="GeneID" id="884245"/>
<dbReference type="KEGG" id="ctr:CT_470"/>
<dbReference type="PATRIC" id="fig|272561.5.peg.508"/>
<dbReference type="HOGENOM" id="CLU_1122990_0_0_0"/>
<dbReference type="InParanoid" id="O84476"/>
<dbReference type="OrthoDB" id="17601at2"/>
<dbReference type="Proteomes" id="UP000000431">
    <property type="component" value="Chromosome"/>
</dbReference>
<dbReference type="GO" id="GO:0043590">
    <property type="term" value="C:bacterial nucleoid"/>
    <property type="evidence" value="ECO:0000318"/>
    <property type="project" value="GO_Central"/>
</dbReference>
<dbReference type="GO" id="GO:0006310">
    <property type="term" value="P:DNA recombination"/>
    <property type="evidence" value="ECO:0007669"/>
    <property type="project" value="UniProtKB-UniRule"/>
</dbReference>
<dbReference type="GO" id="GO:0006302">
    <property type="term" value="P:double-strand break repair"/>
    <property type="evidence" value="ECO:0000318"/>
    <property type="project" value="GO_Central"/>
</dbReference>
<dbReference type="Gene3D" id="1.20.1440.120">
    <property type="entry name" value="Recombination protein O, C-terminal domain"/>
    <property type="match status" value="1"/>
</dbReference>
<dbReference type="HAMAP" id="MF_00201">
    <property type="entry name" value="RecO"/>
    <property type="match status" value="1"/>
</dbReference>
<dbReference type="InterPro" id="IPR037278">
    <property type="entry name" value="ARFGAP/RecO"/>
</dbReference>
<dbReference type="InterPro" id="IPR012340">
    <property type="entry name" value="NA-bd_OB-fold"/>
</dbReference>
<dbReference type="InterPro" id="IPR003717">
    <property type="entry name" value="RecO"/>
</dbReference>
<dbReference type="InterPro" id="IPR042242">
    <property type="entry name" value="RecO_C"/>
</dbReference>
<dbReference type="NCBIfam" id="TIGR00613">
    <property type="entry name" value="reco"/>
    <property type="match status" value="1"/>
</dbReference>
<dbReference type="PANTHER" id="PTHR33991">
    <property type="entry name" value="DNA REPAIR PROTEIN RECO"/>
    <property type="match status" value="1"/>
</dbReference>
<dbReference type="PANTHER" id="PTHR33991:SF1">
    <property type="entry name" value="DNA REPAIR PROTEIN RECO"/>
    <property type="match status" value="1"/>
</dbReference>
<dbReference type="Pfam" id="PF02565">
    <property type="entry name" value="RecO_C"/>
    <property type="match status" value="1"/>
</dbReference>
<dbReference type="SUPFAM" id="SSF57863">
    <property type="entry name" value="ArfGap/RecO-like zinc finger"/>
    <property type="match status" value="1"/>
</dbReference>
<dbReference type="SUPFAM" id="SSF50249">
    <property type="entry name" value="Nucleic acid-binding proteins"/>
    <property type="match status" value="1"/>
</dbReference>
<protein>
    <recommendedName>
        <fullName>DNA repair protein RecO</fullName>
    </recommendedName>
    <alternativeName>
        <fullName>Recombination protein O</fullName>
    </alternativeName>
</protein>